<gene>
    <name evidence="1" type="primary">rplX</name>
    <name type="ordered locus">Bphyt_3633</name>
</gene>
<dbReference type="EMBL" id="CP001052">
    <property type="protein sequence ID" value="ACD18023.1"/>
    <property type="molecule type" value="Genomic_DNA"/>
</dbReference>
<dbReference type="RefSeq" id="WP_006052213.1">
    <property type="nucleotide sequence ID" value="NC_010681.1"/>
</dbReference>
<dbReference type="SMR" id="B2T740"/>
<dbReference type="STRING" id="398527.Bphyt_3633"/>
<dbReference type="GeneID" id="97311003"/>
<dbReference type="KEGG" id="bpy:Bphyt_3633"/>
<dbReference type="eggNOG" id="COG0198">
    <property type="taxonomic scope" value="Bacteria"/>
</dbReference>
<dbReference type="HOGENOM" id="CLU_093315_2_2_4"/>
<dbReference type="OrthoDB" id="9807419at2"/>
<dbReference type="Proteomes" id="UP000001739">
    <property type="component" value="Chromosome 1"/>
</dbReference>
<dbReference type="GO" id="GO:1990904">
    <property type="term" value="C:ribonucleoprotein complex"/>
    <property type="evidence" value="ECO:0007669"/>
    <property type="project" value="UniProtKB-KW"/>
</dbReference>
<dbReference type="GO" id="GO:0005840">
    <property type="term" value="C:ribosome"/>
    <property type="evidence" value="ECO:0007669"/>
    <property type="project" value="UniProtKB-KW"/>
</dbReference>
<dbReference type="GO" id="GO:0019843">
    <property type="term" value="F:rRNA binding"/>
    <property type="evidence" value="ECO:0007669"/>
    <property type="project" value="UniProtKB-UniRule"/>
</dbReference>
<dbReference type="GO" id="GO:0003735">
    <property type="term" value="F:structural constituent of ribosome"/>
    <property type="evidence" value="ECO:0007669"/>
    <property type="project" value="InterPro"/>
</dbReference>
<dbReference type="GO" id="GO:0006412">
    <property type="term" value="P:translation"/>
    <property type="evidence" value="ECO:0007669"/>
    <property type="project" value="UniProtKB-UniRule"/>
</dbReference>
<dbReference type="CDD" id="cd06089">
    <property type="entry name" value="KOW_RPL26"/>
    <property type="match status" value="1"/>
</dbReference>
<dbReference type="Gene3D" id="2.30.30.30">
    <property type="match status" value="1"/>
</dbReference>
<dbReference type="HAMAP" id="MF_01326_B">
    <property type="entry name" value="Ribosomal_uL24_B"/>
    <property type="match status" value="1"/>
</dbReference>
<dbReference type="InterPro" id="IPR005824">
    <property type="entry name" value="KOW"/>
</dbReference>
<dbReference type="InterPro" id="IPR014722">
    <property type="entry name" value="Rib_uL2_dom2"/>
</dbReference>
<dbReference type="InterPro" id="IPR003256">
    <property type="entry name" value="Ribosomal_uL24"/>
</dbReference>
<dbReference type="InterPro" id="IPR005825">
    <property type="entry name" value="Ribosomal_uL24_CS"/>
</dbReference>
<dbReference type="InterPro" id="IPR041988">
    <property type="entry name" value="Ribosomal_uL24_KOW"/>
</dbReference>
<dbReference type="InterPro" id="IPR008991">
    <property type="entry name" value="Translation_prot_SH3-like_sf"/>
</dbReference>
<dbReference type="NCBIfam" id="TIGR01079">
    <property type="entry name" value="rplX_bact"/>
    <property type="match status" value="1"/>
</dbReference>
<dbReference type="PANTHER" id="PTHR12903">
    <property type="entry name" value="MITOCHONDRIAL RIBOSOMAL PROTEIN L24"/>
    <property type="match status" value="1"/>
</dbReference>
<dbReference type="Pfam" id="PF00467">
    <property type="entry name" value="KOW"/>
    <property type="match status" value="1"/>
</dbReference>
<dbReference type="Pfam" id="PF17136">
    <property type="entry name" value="ribosomal_L24"/>
    <property type="match status" value="1"/>
</dbReference>
<dbReference type="SMART" id="SM00739">
    <property type="entry name" value="KOW"/>
    <property type="match status" value="1"/>
</dbReference>
<dbReference type="SUPFAM" id="SSF50104">
    <property type="entry name" value="Translation proteins SH3-like domain"/>
    <property type="match status" value="1"/>
</dbReference>
<dbReference type="PROSITE" id="PS01108">
    <property type="entry name" value="RIBOSOMAL_L24"/>
    <property type="match status" value="1"/>
</dbReference>
<sequence length="102" mass="10735">MNKIRKGDEVIVITGKDKGKRGVVLSVGEGKVIVEGINLVKKHVKPNPMKGTTGGVEAKTMPLQISNVALVDANGKASRVGIKVEGDKKVRFLKTTGAELSA</sequence>
<organism>
    <name type="scientific">Paraburkholderia phytofirmans (strain DSM 17436 / LMG 22146 / PsJN)</name>
    <name type="common">Burkholderia phytofirmans</name>
    <dbReference type="NCBI Taxonomy" id="398527"/>
    <lineage>
        <taxon>Bacteria</taxon>
        <taxon>Pseudomonadati</taxon>
        <taxon>Pseudomonadota</taxon>
        <taxon>Betaproteobacteria</taxon>
        <taxon>Burkholderiales</taxon>
        <taxon>Burkholderiaceae</taxon>
        <taxon>Paraburkholderia</taxon>
    </lineage>
</organism>
<keyword id="KW-0687">Ribonucleoprotein</keyword>
<keyword id="KW-0689">Ribosomal protein</keyword>
<keyword id="KW-0694">RNA-binding</keyword>
<keyword id="KW-0699">rRNA-binding</keyword>
<evidence type="ECO:0000255" key="1">
    <source>
        <dbReference type="HAMAP-Rule" id="MF_01326"/>
    </source>
</evidence>
<evidence type="ECO:0000305" key="2"/>
<reference key="1">
    <citation type="journal article" date="2011" name="J. Bacteriol.">
        <title>Complete genome sequence of the plant growth-promoting endophyte Burkholderia phytofirmans strain PsJN.</title>
        <authorList>
            <person name="Weilharter A."/>
            <person name="Mitter B."/>
            <person name="Shin M.V."/>
            <person name="Chain P.S."/>
            <person name="Nowak J."/>
            <person name="Sessitsch A."/>
        </authorList>
    </citation>
    <scope>NUCLEOTIDE SEQUENCE [LARGE SCALE GENOMIC DNA]</scope>
    <source>
        <strain>DSM 17436 / LMG 22146 / PsJN</strain>
    </source>
</reference>
<comment type="function">
    <text evidence="1">One of two assembly initiator proteins, it binds directly to the 5'-end of the 23S rRNA, where it nucleates assembly of the 50S subunit.</text>
</comment>
<comment type="function">
    <text evidence="1">One of the proteins that surrounds the polypeptide exit tunnel on the outside of the subunit.</text>
</comment>
<comment type="subunit">
    <text evidence="1">Part of the 50S ribosomal subunit.</text>
</comment>
<comment type="similarity">
    <text evidence="1">Belongs to the universal ribosomal protein uL24 family.</text>
</comment>
<name>RL24_PARPJ</name>
<feature type="chain" id="PRO_1000141979" description="Large ribosomal subunit protein uL24">
    <location>
        <begin position="1"/>
        <end position="102"/>
    </location>
</feature>
<proteinExistence type="inferred from homology"/>
<accession>B2T740</accession>
<protein>
    <recommendedName>
        <fullName evidence="1">Large ribosomal subunit protein uL24</fullName>
    </recommendedName>
    <alternativeName>
        <fullName evidence="2">50S ribosomal protein L24</fullName>
    </alternativeName>
</protein>